<proteinExistence type="inferred from homology"/>
<accession>B9LI75</accession>
<sequence>MEIIPAIDIKDGRCVRLYQGDFAQMTVYADDPVAVARSWEAQGATRLHLVDLDGARAGHPQNVDAILAITQAVQIPVQLGGGLRREQDVESALALGVERVIIGTAAIAETDLVARLLDRFGEQIVIGIDARNGLVATDGWTVTSSVKATVLAEQMANLGARRIIYTDISRDGALSGPNFAALSELITPHGPAIIASGGIASIDHVRQLAQLGVEGAIIGKALYVGAVKLAEAMAVAHMTNV</sequence>
<reference key="1">
    <citation type="submission" date="2009-01" db="EMBL/GenBank/DDBJ databases">
        <title>Complete sequence of Chloroflexus sp. Y-400-fl.</title>
        <authorList>
            <consortium name="US DOE Joint Genome Institute"/>
            <person name="Lucas S."/>
            <person name="Copeland A."/>
            <person name="Lapidus A."/>
            <person name="Glavina del Rio T."/>
            <person name="Dalin E."/>
            <person name="Tice H."/>
            <person name="Bruce D."/>
            <person name="Goodwin L."/>
            <person name="Pitluck S."/>
            <person name="Sims D."/>
            <person name="Kiss H."/>
            <person name="Brettin T."/>
            <person name="Detter J.C."/>
            <person name="Han C."/>
            <person name="Larimer F."/>
            <person name="Land M."/>
            <person name="Hauser L."/>
            <person name="Kyrpides N."/>
            <person name="Ovchinnikova G."/>
            <person name="Bryant D.A."/>
            <person name="Richardson P."/>
        </authorList>
    </citation>
    <scope>NUCLEOTIDE SEQUENCE [LARGE SCALE GENOMIC DNA]</scope>
    <source>
        <strain>ATCC 29364 / DSM 637 / Y-400-fl</strain>
    </source>
</reference>
<dbReference type="EC" id="5.3.1.16" evidence="1"/>
<dbReference type="EMBL" id="CP001364">
    <property type="protein sequence ID" value="ACM51810.1"/>
    <property type="molecule type" value="Genomic_DNA"/>
</dbReference>
<dbReference type="SMR" id="B9LI75"/>
<dbReference type="KEGG" id="chl:Chy400_0371"/>
<dbReference type="HOGENOM" id="CLU_048577_1_1_0"/>
<dbReference type="OrthoDB" id="9781903at2"/>
<dbReference type="UniPathway" id="UPA00031">
    <property type="reaction ID" value="UER00009"/>
</dbReference>
<dbReference type="GO" id="GO:0005737">
    <property type="term" value="C:cytoplasm"/>
    <property type="evidence" value="ECO:0007669"/>
    <property type="project" value="UniProtKB-SubCell"/>
</dbReference>
<dbReference type="GO" id="GO:0003949">
    <property type="term" value="F:1-(5-phosphoribosyl)-5-[(5-phosphoribosylamino)methylideneamino]imidazole-4-carboxamide isomerase activity"/>
    <property type="evidence" value="ECO:0007669"/>
    <property type="project" value="UniProtKB-UniRule"/>
</dbReference>
<dbReference type="GO" id="GO:0000105">
    <property type="term" value="P:L-histidine biosynthetic process"/>
    <property type="evidence" value="ECO:0007669"/>
    <property type="project" value="UniProtKB-UniRule"/>
</dbReference>
<dbReference type="GO" id="GO:0000162">
    <property type="term" value="P:L-tryptophan biosynthetic process"/>
    <property type="evidence" value="ECO:0007669"/>
    <property type="project" value="TreeGrafter"/>
</dbReference>
<dbReference type="CDD" id="cd04732">
    <property type="entry name" value="HisA"/>
    <property type="match status" value="1"/>
</dbReference>
<dbReference type="FunFam" id="3.20.20.70:FF:000009">
    <property type="entry name" value="1-(5-phosphoribosyl)-5-[(5-phosphoribosylamino)methylideneamino] imidazole-4-carboxamide isomerase"/>
    <property type="match status" value="1"/>
</dbReference>
<dbReference type="Gene3D" id="3.20.20.70">
    <property type="entry name" value="Aldolase class I"/>
    <property type="match status" value="1"/>
</dbReference>
<dbReference type="HAMAP" id="MF_01014">
    <property type="entry name" value="HisA"/>
    <property type="match status" value="1"/>
</dbReference>
<dbReference type="InterPro" id="IPR013785">
    <property type="entry name" value="Aldolase_TIM"/>
</dbReference>
<dbReference type="InterPro" id="IPR006062">
    <property type="entry name" value="His_biosynth"/>
</dbReference>
<dbReference type="InterPro" id="IPR006063">
    <property type="entry name" value="HisA_bact_arch"/>
</dbReference>
<dbReference type="InterPro" id="IPR044524">
    <property type="entry name" value="Isoase_HisA-like"/>
</dbReference>
<dbReference type="InterPro" id="IPR023016">
    <property type="entry name" value="Isoase_HisA-like_bact"/>
</dbReference>
<dbReference type="InterPro" id="IPR011060">
    <property type="entry name" value="RibuloseP-bd_barrel"/>
</dbReference>
<dbReference type="NCBIfam" id="TIGR00007">
    <property type="entry name" value="1-(5-phosphoribosyl)-5-[(5-phosphoribosylamino)methylideneamino]imidazole-4-carboxamide isomerase"/>
    <property type="match status" value="1"/>
</dbReference>
<dbReference type="PANTHER" id="PTHR43090">
    <property type="entry name" value="1-(5-PHOSPHORIBOSYL)-5-[(5-PHOSPHORIBOSYLAMINO)METHYLIDENEAMINO] IMIDAZOLE-4-CARBOXAMIDE ISOMERASE"/>
    <property type="match status" value="1"/>
</dbReference>
<dbReference type="PANTHER" id="PTHR43090:SF2">
    <property type="entry name" value="1-(5-PHOSPHORIBOSYL)-5-[(5-PHOSPHORIBOSYLAMINO)METHYLIDENEAMINO] IMIDAZOLE-4-CARBOXAMIDE ISOMERASE"/>
    <property type="match status" value="1"/>
</dbReference>
<dbReference type="Pfam" id="PF00977">
    <property type="entry name" value="His_biosynth"/>
    <property type="match status" value="1"/>
</dbReference>
<dbReference type="SUPFAM" id="SSF51366">
    <property type="entry name" value="Ribulose-phoshate binding barrel"/>
    <property type="match status" value="1"/>
</dbReference>
<protein>
    <recommendedName>
        <fullName evidence="1">1-(5-phosphoribosyl)-5-[(5-phosphoribosylamino)methylideneamino] imidazole-4-carboxamide isomerase</fullName>
        <ecNumber evidence="1">5.3.1.16</ecNumber>
    </recommendedName>
    <alternativeName>
        <fullName evidence="1">Phosphoribosylformimino-5-aminoimidazole carboxamide ribotide isomerase</fullName>
    </alternativeName>
</protein>
<comment type="catalytic activity">
    <reaction evidence="1">
        <text>1-(5-phospho-beta-D-ribosyl)-5-[(5-phospho-beta-D-ribosylamino)methylideneamino]imidazole-4-carboxamide = 5-[(5-phospho-1-deoxy-D-ribulos-1-ylimino)methylamino]-1-(5-phospho-beta-D-ribosyl)imidazole-4-carboxamide</text>
        <dbReference type="Rhea" id="RHEA:15469"/>
        <dbReference type="ChEBI" id="CHEBI:58435"/>
        <dbReference type="ChEBI" id="CHEBI:58525"/>
        <dbReference type="EC" id="5.3.1.16"/>
    </reaction>
</comment>
<comment type="pathway">
    <text evidence="1">Amino-acid biosynthesis; L-histidine biosynthesis; L-histidine from 5-phospho-alpha-D-ribose 1-diphosphate: step 4/9.</text>
</comment>
<comment type="subcellular location">
    <subcellularLocation>
        <location evidence="1">Cytoplasm</location>
    </subcellularLocation>
</comment>
<comment type="similarity">
    <text evidence="1">Belongs to the HisA/HisF family.</text>
</comment>
<organism>
    <name type="scientific">Chloroflexus aurantiacus (strain ATCC 29364 / DSM 637 / Y-400-fl)</name>
    <dbReference type="NCBI Taxonomy" id="480224"/>
    <lineage>
        <taxon>Bacteria</taxon>
        <taxon>Bacillati</taxon>
        <taxon>Chloroflexota</taxon>
        <taxon>Chloroflexia</taxon>
        <taxon>Chloroflexales</taxon>
        <taxon>Chloroflexineae</taxon>
        <taxon>Chloroflexaceae</taxon>
        <taxon>Chloroflexus</taxon>
    </lineage>
</organism>
<feature type="chain" id="PRO_1000148961" description="1-(5-phosphoribosyl)-5-[(5-phosphoribosylamino)methylideneamino] imidazole-4-carboxamide isomerase">
    <location>
        <begin position="1"/>
        <end position="241"/>
    </location>
</feature>
<feature type="active site" description="Proton acceptor" evidence="1">
    <location>
        <position position="8"/>
    </location>
</feature>
<feature type="active site" description="Proton donor" evidence="1">
    <location>
        <position position="129"/>
    </location>
</feature>
<name>HIS4_CHLSY</name>
<evidence type="ECO:0000255" key="1">
    <source>
        <dbReference type="HAMAP-Rule" id="MF_01014"/>
    </source>
</evidence>
<keyword id="KW-0028">Amino-acid biosynthesis</keyword>
<keyword id="KW-0963">Cytoplasm</keyword>
<keyword id="KW-0368">Histidine biosynthesis</keyword>
<keyword id="KW-0413">Isomerase</keyword>
<gene>
    <name evidence="1" type="primary">hisA</name>
    <name type="ordered locus">Chy400_0371</name>
</gene>